<reference key="1">
    <citation type="journal article" date="2006" name="Genome Res.">
        <title>Skewed genomic variability in strains of the toxigenic bacterial pathogen, Clostridium perfringens.</title>
        <authorList>
            <person name="Myers G.S.A."/>
            <person name="Rasko D.A."/>
            <person name="Cheung J.K."/>
            <person name="Ravel J."/>
            <person name="Seshadri R."/>
            <person name="DeBoy R.T."/>
            <person name="Ren Q."/>
            <person name="Varga J."/>
            <person name="Awad M.M."/>
            <person name="Brinkac L.M."/>
            <person name="Daugherty S.C."/>
            <person name="Haft D.H."/>
            <person name="Dodson R.J."/>
            <person name="Madupu R."/>
            <person name="Nelson W.C."/>
            <person name="Rosovitz M.J."/>
            <person name="Sullivan S.A."/>
            <person name="Khouri H."/>
            <person name="Dimitrov G.I."/>
            <person name="Watkins K.L."/>
            <person name="Mulligan S."/>
            <person name="Benton J."/>
            <person name="Radune D."/>
            <person name="Fisher D.J."/>
            <person name="Atkins H.S."/>
            <person name="Hiscox T."/>
            <person name="Jost B.H."/>
            <person name="Billington S.J."/>
            <person name="Songer J.G."/>
            <person name="McClane B.A."/>
            <person name="Titball R.W."/>
            <person name="Rood J.I."/>
            <person name="Melville S.B."/>
            <person name="Paulsen I.T."/>
        </authorList>
    </citation>
    <scope>NUCLEOTIDE SEQUENCE [LARGE SCALE GENOMIC DNA]</scope>
    <source>
        <strain>SM101 / Type A</strain>
    </source>
</reference>
<comment type="function">
    <text evidence="1">Transfers and isomerizes the ribose moiety from AdoMet to the 7-aminomethyl group of 7-deazaguanine (preQ1-tRNA) to give epoxyqueuosine (oQ-tRNA).</text>
</comment>
<comment type="catalytic activity">
    <reaction evidence="1">
        <text>7-aminomethyl-7-carbaguanosine(34) in tRNA + S-adenosyl-L-methionine = epoxyqueuosine(34) in tRNA + adenine + L-methionine + 2 H(+)</text>
        <dbReference type="Rhea" id="RHEA:32155"/>
        <dbReference type="Rhea" id="RHEA-COMP:10342"/>
        <dbReference type="Rhea" id="RHEA-COMP:18582"/>
        <dbReference type="ChEBI" id="CHEBI:15378"/>
        <dbReference type="ChEBI" id="CHEBI:16708"/>
        <dbReference type="ChEBI" id="CHEBI:57844"/>
        <dbReference type="ChEBI" id="CHEBI:59789"/>
        <dbReference type="ChEBI" id="CHEBI:82833"/>
        <dbReference type="ChEBI" id="CHEBI:194443"/>
        <dbReference type="EC" id="2.4.99.17"/>
    </reaction>
</comment>
<comment type="pathway">
    <text evidence="1">tRNA modification; tRNA-queuosine biosynthesis.</text>
</comment>
<comment type="subunit">
    <text evidence="1">Monomer.</text>
</comment>
<comment type="subcellular location">
    <subcellularLocation>
        <location evidence="1">Cytoplasm</location>
    </subcellularLocation>
</comment>
<comment type="similarity">
    <text evidence="1">Belongs to the QueA family.</text>
</comment>
<gene>
    <name evidence="1" type="primary">queA</name>
    <name type="ordered locus">CPR_1913</name>
</gene>
<organism>
    <name type="scientific">Clostridium perfringens (strain SM101 / Type A)</name>
    <dbReference type="NCBI Taxonomy" id="289380"/>
    <lineage>
        <taxon>Bacteria</taxon>
        <taxon>Bacillati</taxon>
        <taxon>Bacillota</taxon>
        <taxon>Clostridia</taxon>
        <taxon>Eubacteriales</taxon>
        <taxon>Clostridiaceae</taxon>
        <taxon>Clostridium</taxon>
    </lineage>
</organism>
<protein>
    <recommendedName>
        <fullName evidence="1">S-adenosylmethionine:tRNA ribosyltransferase-isomerase</fullName>
        <ecNumber evidence="1">2.4.99.17</ecNumber>
    </recommendedName>
    <alternativeName>
        <fullName evidence="1">Queuosine biosynthesis protein QueA</fullName>
    </alternativeName>
</protein>
<evidence type="ECO:0000255" key="1">
    <source>
        <dbReference type="HAMAP-Rule" id="MF_00113"/>
    </source>
</evidence>
<dbReference type="EC" id="2.4.99.17" evidence="1"/>
<dbReference type="EMBL" id="CP000312">
    <property type="protein sequence ID" value="ABG86769.1"/>
    <property type="molecule type" value="Genomic_DNA"/>
</dbReference>
<dbReference type="RefSeq" id="WP_011592785.1">
    <property type="nucleotide sequence ID" value="NC_008262.1"/>
</dbReference>
<dbReference type="SMR" id="Q0SRN4"/>
<dbReference type="KEGG" id="cpr:CPR_1913"/>
<dbReference type="UniPathway" id="UPA00392"/>
<dbReference type="Proteomes" id="UP000001824">
    <property type="component" value="Chromosome"/>
</dbReference>
<dbReference type="GO" id="GO:0005737">
    <property type="term" value="C:cytoplasm"/>
    <property type="evidence" value="ECO:0007669"/>
    <property type="project" value="UniProtKB-SubCell"/>
</dbReference>
<dbReference type="GO" id="GO:0051075">
    <property type="term" value="F:S-adenosylmethionine:tRNA ribosyltransferase-isomerase activity"/>
    <property type="evidence" value="ECO:0007669"/>
    <property type="project" value="UniProtKB-EC"/>
</dbReference>
<dbReference type="GO" id="GO:0008616">
    <property type="term" value="P:queuosine biosynthetic process"/>
    <property type="evidence" value="ECO:0007669"/>
    <property type="project" value="UniProtKB-UniRule"/>
</dbReference>
<dbReference type="GO" id="GO:0002099">
    <property type="term" value="P:tRNA wobble guanine modification"/>
    <property type="evidence" value="ECO:0007669"/>
    <property type="project" value="TreeGrafter"/>
</dbReference>
<dbReference type="FunFam" id="2.40.10.240:FF:000002">
    <property type="entry name" value="S-adenosylmethionine:tRNA ribosyltransferase-isomerase"/>
    <property type="match status" value="1"/>
</dbReference>
<dbReference type="FunFam" id="3.40.1780.10:FF:000001">
    <property type="entry name" value="S-adenosylmethionine:tRNA ribosyltransferase-isomerase"/>
    <property type="match status" value="1"/>
</dbReference>
<dbReference type="Gene3D" id="2.40.10.240">
    <property type="entry name" value="QueA-like"/>
    <property type="match status" value="1"/>
</dbReference>
<dbReference type="Gene3D" id="3.40.1780.10">
    <property type="entry name" value="QueA-like"/>
    <property type="match status" value="1"/>
</dbReference>
<dbReference type="HAMAP" id="MF_00113">
    <property type="entry name" value="QueA"/>
    <property type="match status" value="1"/>
</dbReference>
<dbReference type="InterPro" id="IPR003699">
    <property type="entry name" value="QueA"/>
</dbReference>
<dbReference type="InterPro" id="IPR042118">
    <property type="entry name" value="QueA_dom1"/>
</dbReference>
<dbReference type="InterPro" id="IPR042119">
    <property type="entry name" value="QueA_dom2"/>
</dbReference>
<dbReference type="InterPro" id="IPR036100">
    <property type="entry name" value="QueA_sf"/>
</dbReference>
<dbReference type="NCBIfam" id="NF001140">
    <property type="entry name" value="PRK00147.1"/>
    <property type="match status" value="1"/>
</dbReference>
<dbReference type="NCBIfam" id="TIGR00113">
    <property type="entry name" value="queA"/>
    <property type="match status" value="1"/>
</dbReference>
<dbReference type="PANTHER" id="PTHR30307">
    <property type="entry name" value="S-ADENOSYLMETHIONINE:TRNA RIBOSYLTRANSFERASE-ISOMERASE"/>
    <property type="match status" value="1"/>
</dbReference>
<dbReference type="PANTHER" id="PTHR30307:SF0">
    <property type="entry name" value="S-ADENOSYLMETHIONINE:TRNA RIBOSYLTRANSFERASE-ISOMERASE"/>
    <property type="match status" value="1"/>
</dbReference>
<dbReference type="Pfam" id="PF02547">
    <property type="entry name" value="Queuosine_synth"/>
    <property type="match status" value="1"/>
</dbReference>
<dbReference type="SUPFAM" id="SSF111337">
    <property type="entry name" value="QueA-like"/>
    <property type="match status" value="1"/>
</dbReference>
<feature type="chain" id="PRO_1000015203" description="S-adenosylmethionine:tRNA ribosyltransferase-isomerase">
    <location>
        <begin position="1"/>
        <end position="341"/>
    </location>
</feature>
<keyword id="KW-0963">Cytoplasm</keyword>
<keyword id="KW-0671">Queuosine biosynthesis</keyword>
<keyword id="KW-0949">S-adenosyl-L-methionine</keyword>
<keyword id="KW-0808">Transferase</keyword>
<name>QUEA_CLOPS</name>
<accession>Q0SRN4</accession>
<proteinExistence type="inferred from homology"/>
<sequence>MKVSDFYFELPEELIAQYPLEKRDSSRLMVLDKKTGEIEHRKFHDILEYLNEGDTLVLNNTRVLPARLIGEKEETGGKIEFLLLKRIEGDKWECLAKPGRKAKVGTVFTFGEGKLKAIVREIGEEGNRIIEFKYDGIFEQVLDELGQMPLPPYIHEKLEDKERYQTVYSKEKGSAAAPTAGLHFTEDLLKEIKDKGVNIAYLTLHVGLGTFRPVKVDDVNNHVMHSEYYHLDKENAELINKTKEAGKRVIAVGTTSSRTLETIGDENGRVREQSGWTDIFIYPGYKFKIVDNLITNFHLPESTLIMLVSALAGQDNIMNAYNTAVKEKYRFFSFGDSMFIK</sequence>